<proteinExistence type="inferred from homology"/>
<dbReference type="EC" id="3.1.-.-"/>
<dbReference type="EC" id="3.6.4.-"/>
<dbReference type="EMBL" id="GQ979703">
    <property type="protein sequence ID" value="ADC80078.1"/>
    <property type="molecule type" value="Genomic_DNA"/>
</dbReference>
<dbReference type="RefSeq" id="YP_009613482.1">
    <property type="nucleotide sequence ID" value="NC_042024.1"/>
</dbReference>
<dbReference type="SMR" id="D3WAC1"/>
<dbReference type="GeneID" id="40089857"/>
<dbReference type="Proteomes" id="UP000002348">
    <property type="component" value="Segment"/>
</dbReference>
<dbReference type="GO" id="GO:0004519">
    <property type="term" value="F:endonuclease activity"/>
    <property type="evidence" value="ECO:0007669"/>
    <property type="project" value="UniProtKB-KW"/>
</dbReference>
<dbReference type="GO" id="GO:0046872">
    <property type="term" value="F:metal ion binding"/>
    <property type="evidence" value="ECO:0007669"/>
    <property type="project" value="UniProtKB-KW"/>
</dbReference>
<dbReference type="Gene3D" id="3.40.50.300">
    <property type="entry name" value="P-loop containing nucleotide triphosphate hydrolases"/>
    <property type="match status" value="1"/>
</dbReference>
<dbReference type="InterPro" id="IPR027417">
    <property type="entry name" value="P-loop_NTPase"/>
</dbReference>
<dbReference type="InterPro" id="IPR046461">
    <property type="entry name" value="TerL_ATPase"/>
</dbReference>
<dbReference type="InterPro" id="IPR046462">
    <property type="entry name" value="TerL_nuclease"/>
</dbReference>
<dbReference type="InterPro" id="IPR005021">
    <property type="entry name" value="Terminase_largesu-like"/>
</dbReference>
<dbReference type="PANTHER" id="PTHR41287">
    <property type="match status" value="1"/>
</dbReference>
<dbReference type="PANTHER" id="PTHR41287:SF1">
    <property type="entry name" value="PROTEIN YMFN"/>
    <property type="match status" value="1"/>
</dbReference>
<dbReference type="Pfam" id="PF03354">
    <property type="entry name" value="TerL_ATPase"/>
    <property type="match status" value="1"/>
</dbReference>
<dbReference type="Pfam" id="PF20441">
    <property type="entry name" value="TerL_nuclease"/>
    <property type="match status" value="1"/>
</dbReference>
<comment type="function">
    <text evidence="2 3">Probable terminase large subunit (PubMed:24027307). The terminase large subunit acts as an ATP driven molecular motor necessary for viral DNA translocation into empty capsids and as an endonuclease that cuts the viral genome to initiate and to end a packaging reaction (By similarity). The terminase lies at a unique vertex of the procapsid and is composed of two subunits, a small terminase subunit involved in viral DNA recognition (packaging sequence), and a large terminase subunit possessing endonucleolytic and ATPase activities (By similarity). Both terminase subunits heterooligomerize and are docked on the portal protein to form the packaging machine (By similarity). The terminase large subunit exhibits endonuclease activity and cleaves the viral genome concatemer (By similarity).</text>
</comment>
<comment type="cofactor">
    <cofactor evidence="1">
        <name>Mn(2+)</name>
        <dbReference type="ChEBI" id="CHEBI:29035"/>
    </cofactor>
    <cofactor evidence="1">
        <name>Mg(2+)</name>
        <dbReference type="ChEBI" id="CHEBI:18420"/>
    </cofactor>
    <text evidence="1">Binds 2 divalent metal cations per subunit.</text>
</comment>
<comment type="subunit">
    <text evidence="2">Interacts with the terminase small subunit; the active complex is probably heterooligomeric.</text>
</comment>
<comment type="similarity">
    <text evidence="5">Belongs to the skunavirus terminase large subunit family.</text>
</comment>
<sequence>MYYLNKMLEYNKENGIIINKYIRKTIQKQIRIHNKYIYRYDRVTQAIEWIEDNFYLTTGNLMKIELLPTQRWWYELMLGYDMIDEKGVQVNLINEIFLNLGRGSGKSSLMATRVLNWMILGGQYGGESLVIAYDNTQARHVFDQVRNQTEASDTLRVYNENKIFKSTKQGLEFTSFKTTFKKQTNDTLRAQGGNSSLNIFDEVHTYGEDITESVNKGSRQKQDNWQSIYITSGGLKRDGLYDKLVERFKSEEEFYNDRSFGLLYMLENHEQVKDKKNWTMALPLIGSVPKWSGVIEEYELAQGDPALQNKFLAFNMGLPMQDTAYYFTPQDTKLTDFNLSVFNKNRTYVGIDLSLIGDLTAVSFVCELEGKTYSHTLTFSVRSQYEQLDTEQQELWTEFVDRGELILLDTEYINVNDLIPHINDFRTKTGCRLRKIGYDPARYEILKGLIERYFFDKDGDNQRAIRQGFSMNDYIKLLKSKLAENKLIHNQKVMQWALNNTAVKIGQSGDYMYTKKLEKDKIDPTVALTMALEMAVSDEV</sequence>
<organismHost>
    <name type="scientific">Lactococcus lactis</name>
    <dbReference type="NCBI Taxonomy" id="1358"/>
</organismHost>
<reference key="1">
    <citation type="submission" date="2010-02" db="EMBL/GenBank/DDBJ databases">
        <title>Complete genomic sequence of Lactococcus lactis phage p2.</title>
        <authorList>
            <person name="Tremblay D.M."/>
            <person name="Deveau H."/>
            <person name="Moineau S."/>
        </authorList>
    </citation>
    <scope>NUCLEOTIDE SEQUENCE [LARGE SCALE GENOMIC DNA]</scope>
</reference>
<reference key="2">
    <citation type="journal article" date="2013" name="J. Virol.">
        <title>Structure, adsorption to host, and infection mechanism of virulent lactococcal phage p2.</title>
        <authorList>
            <person name="Bebeacua C."/>
            <person name="Tremblay D."/>
            <person name="Farenc C."/>
            <person name="Chapot-Chartier M.P."/>
            <person name="Sadovskaya I."/>
            <person name="van Heel M."/>
            <person name="Veesler D."/>
            <person name="Moineau S."/>
            <person name="Cambillau C."/>
        </authorList>
    </citation>
    <scope>FUNCTION</scope>
</reference>
<organism>
    <name type="scientific">Lactococcus phage p2</name>
    <name type="common">Lactococcus lactis bacteriophage p2</name>
    <dbReference type="NCBI Taxonomy" id="254252"/>
    <lineage>
        <taxon>Viruses</taxon>
        <taxon>Duplodnaviria</taxon>
        <taxon>Heunggongvirae</taxon>
        <taxon>Uroviricota</taxon>
        <taxon>Caudoviricetes</taxon>
        <taxon>Skunavirus</taxon>
    </lineage>
</organism>
<keyword id="KW-0255">Endonuclease</keyword>
<keyword id="KW-0378">Hydrolase</keyword>
<keyword id="KW-0460">Magnesium</keyword>
<keyword id="KW-0464">Manganese</keyword>
<keyword id="KW-0479">Metal-binding</keyword>
<keyword id="KW-0540">Nuclease</keyword>
<keyword id="KW-0231">Viral genome packaging</keyword>
<keyword id="KW-1188">Viral release from host cell</keyword>
<name>TERL_BPLP2</name>
<accession>D3WAC1</accession>
<evidence type="ECO:0000250" key="1">
    <source>
        <dbReference type="UniProtKB" id="P54308"/>
    </source>
</evidence>
<evidence type="ECO:0000250" key="2">
    <source>
        <dbReference type="UniProtKB" id="Q9MCT1"/>
    </source>
</evidence>
<evidence type="ECO:0000269" key="3">
    <source>
    </source>
</evidence>
<evidence type="ECO:0000303" key="4">
    <source>
    </source>
</evidence>
<evidence type="ECO:0000305" key="5"/>
<feature type="chain" id="PRO_0000438221" description="Terminase large subunit">
    <location>
        <begin position="1"/>
        <end position="540"/>
    </location>
</feature>
<feature type="binding site" evidence="1">
    <location>
        <position position="352"/>
    </location>
    <ligand>
        <name>Mn(2+)</name>
        <dbReference type="ChEBI" id="CHEBI:29035"/>
        <label>1</label>
        <note>catalytic; for nuclease activity</note>
    </ligand>
</feature>
<feature type="binding site" evidence="1">
    <location>
        <position position="352"/>
    </location>
    <ligand>
        <name>Mn(2+)</name>
        <dbReference type="ChEBI" id="CHEBI:29035"/>
        <label>2</label>
        <note>catalytic; for nuclease activity</note>
    </ligand>
</feature>
<feature type="binding site" evidence="1">
    <location>
        <position position="424"/>
    </location>
    <ligand>
        <name>Mn(2+)</name>
        <dbReference type="ChEBI" id="CHEBI:29035"/>
        <label>1</label>
        <note>catalytic; for nuclease activity</note>
    </ligand>
</feature>
<feature type="binding site" evidence="1">
    <location>
        <position position="523"/>
    </location>
    <ligand>
        <name>Mn(2+)</name>
        <dbReference type="ChEBI" id="CHEBI:29035"/>
        <label>2</label>
        <note>catalytic; for nuclease activity</note>
    </ligand>
</feature>
<protein>
    <recommendedName>
        <fullName evidence="4">Terminase large subunit</fullName>
    </recommendedName>
    <alternativeName>
        <fullName>DNA-packaging protein</fullName>
    </alternativeName>
    <alternativeName>
        <fullName evidence="5">Gene product 2</fullName>
        <shortName evidence="5">gp2</shortName>
    </alternativeName>
    <domain>
        <recommendedName>
            <fullName>Endonuclease</fullName>
            <ecNumber>3.1.-.-</ecNumber>
        </recommendedName>
    </domain>
    <domain>
        <recommendedName>
            <fullName>ATPase</fullName>
            <ecNumber>3.6.4.-</ecNumber>
        </recommendedName>
    </domain>
</protein>